<sequence length="193" mass="21251">MRLCDRDIEAWLDEGRLSINPRPPVERINGATVDVRLGNKFRTFRGHTAAFIDLSGPKDEVSAALDRVMSDEIVLDESEAFYLHPGELALAVTLESVTLPADLVGWLDGRSSLARLGLMVHVTAHRIDPGWSGCIVLEFYNSGKLPLALRPGMLIGALSFEPLSGPAARPYNRREDAKYRNQQGAVASRIDKD</sequence>
<evidence type="ECO:0000255" key="1">
    <source>
        <dbReference type="HAMAP-Rule" id="MF_00146"/>
    </source>
</evidence>
<evidence type="ECO:0000256" key="2">
    <source>
        <dbReference type="SAM" id="MobiDB-lite"/>
    </source>
</evidence>
<organism>
    <name type="scientific">Escherichia coli O157:H7 (strain EC4115 / EHEC)</name>
    <dbReference type="NCBI Taxonomy" id="444450"/>
    <lineage>
        <taxon>Bacteria</taxon>
        <taxon>Pseudomonadati</taxon>
        <taxon>Pseudomonadota</taxon>
        <taxon>Gammaproteobacteria</taxon>
        <taxon>Enterobacterales</taxon>
        <taxon>Enterobacteriaceae</taxon>
        <taxon>Escherichia</taxon>
    </lineage>
</organism>
<proteinExistence type="inferred from homology"/>
<name>DCD_ECO5E</name>
<feature type="chain" id="PRO_1000096422" description="dCTP deaminase">
    <location>
        <begin position="1"/>
        <end position="193"/>
    </location>
</feature>
<feature type="region of interest" description="Disordered" evidence="2">
    <location>
        <begin position="169"/>
        <end position="193"/>
    </location>
</feature>
<feature type="active site" description="Proton donor/acceptor" evidence="1">
    <location>
        <position position="138"/>
    </location>
</feature>
<feature type="binding site" evidence="1">
    <location>
        <begin position="110"/>
        <end position="115"/>
    </location>
    <ligand>
        <name>dCTP</name>
        <dbReference type="ChEBI" id="CHEBI:61481"/>
    </ligand>
</feature>
<feature type="binding site" evidence="1">
    <location>
        <position position="128"/>
    </location>
    <ligand>
        <name>dCTP</name>
        <dbReference type="ChEBI" id="CHEBI:61481"/>
    </ligand>
</feature>
<feature type="binding site" evidence="1">
    <location>
        <begin position="136"/>
        <end position="138"/>
    </location>
    <ligand>
        <name>dCTP</name>
        <dbReference type="ChEBI" id="CHEBI:61481"/>
    </ligand>
</feature>
<feature type="binding site" evidence="1">
    <location>
        <position position="171"/>
    </location>
    <ligand>
        <name>dCTP</name>
        <dbReference type="ChEBI" id="CHEBI:61481"/>
    </ligand>
</feature>
<feature type="binding site" evidence="1">
    <location>
        <position position="178"/>
    </location>
    <ligand>
        <name>dCTP</name>
        <dbReference type="ChEBI" id="CHEBI:61481"/>
    </ligand>
</feature>
<feature type="binding site" evidence="1">
    <location>
        <position position="182"/>
    </location>
    <ligand>
        <name>dCTP</name>
        <dbReference type="ChEBI" id="CHEBI:61481"/>
    </ligand>
</feature>
<protein>
    <recommendedName>
        <fullName evidence="1">dCTP deaminase</fullName>
        <ecNumber evidence="1">3.5.4.13</ecNumber>
    </recommendedName>
    <alternativeName>
        <fullName evidence="1">Deoxycytidine triphosphate deaminase</fullName>
    </alternativeName>
</protein>
<comment type="function">
    <text evidence="1">Catalyzes the deamination of dCTP to dUTP.</text>
</comment>
<comment type="catalytic activity">
    <reaction evidence="1">
        <text>dCTP + H2O + H(+) = dUTP + NH4(+)</text>
        <dbReference type="Rhea" id="RHEA:22680"/>
        <dbReference type="ChEBI" id="CHEBI:15377"/>
        <dbReference type="ChEBI" id="CHEBI:15378"/>
        <dbReference type="ChEBI" id="CHEBI:28938"/>
        <dbReference type="ChEBI" id="CHEBI:61481"/>
        <dbReference type="ChEBI" id="CHEBI:61555"/>
        <dbReference type="EC" id="3.5.4.13"/>
    </reaction>
</comment>
<comment type="pathway">
    <text evidence="1">Pyrimidine metabolism; dUMP biosynthesis; dUMP from dCTP (dUTP route): step 1/2.</text>
</comment>
<comment type="subunit">
    <text evidence="1">Homotrimer.</text>
</comment>
<comment type="similarity">
    <text evidence="1">Belongs to the dCTP deaminase family.</text>
</comment>
<keyword id="KW-0378">Hydrolase</keyword>
<keyword id="KW-0546">Nucleotide metabolism</keyword>
<keyword id="KW-0547">Nucleotide-binding</keyword>
<dbReference type="EC" id="3.5.4.13" evidence="1"/>
<dbReference type="EMBL" id="CP001164">
    <property type="protein sequence ID" value="ACI35382.1"/>
    <property type="molecule type" value="Genomic_DNA"/>
</dbReference>
<dbReference type="RefSeq" id="WP_001234777.1">
    <property type="nucleotide sequence ID" value="NC_011353.1"/>
</dbReference>
<dbReference type="SMR" id="B5YUC5"/>
<dbReference type="KEGG" id="ecf:ECH74115_3002"/>
<dbReference type="HOGENOM" id="CLU_087476_2_0_6"/>
<dbReference type="UniPathway" id="UPA00610">
    <property type="reaction ID" value="UER00665"/>
</dbReference>
<dbReference type="GO" id="GO:0008829">
    <property type="term" value="F:dCTP deaminase activity"/>
    <property type="evidence" value="ECO:0007669"/>
    <property type="project" value="UniProtKB-UniRule"/>
</dbReference>
<dbReference type="GO" id="GO:0000166">
    <property type="term" value="F:nucleotide binding"/>
    <property type="evidence" value="ECO:0007669"/>
    <property type="project" value="UniProtKB-KW"/>
</dbReference>
<dbReference type="GO" id="GO:0006226">
    <property type="term" value="P:dUMP biosynthetic process"/>
    <property type="evidence" value="ECO:0007669"/>
    <property type="project" value="UniProtKB-UniPathway"/>
</dbReference>
<dbReference type="GO" id="GO:0006229">
    <property type="term" value="P:dUTP biosynthetic process"/>
    <property type="evidence" value="ECO:0007669"/>
    <property type="project" value="UniProtKB-UniRule"/>
</dbReference>
<dbReference type="GO" id="GO:0015949">
    <property type="term" value="P:nucleobase-containing small molecule interconversion"/>
    <property type="evidence" value="ECO:0007669"/>
    <property type="project" value="TreeGrafter"/>
</dbReference>
<dbReference type="CDD" id="cd07557">
    <property type="entry name" value="trimeric_dUTPase"/>
    <property type="match status" value="1"/>
</dbReference>
<dbReference type="FunFam" id="2.70.40.10:FF:000003">
    <property type="entry name" value="dCTP deaminase"/>
    <property type="match status" value="1"/>
</dbReference>
<dbReference type="Gene3D" id="2.70.40.10">
    <property type="match status" value="1"/>
</dbReference>
<dbReference type="HAMAP" id="MF_00146">
    <property type="entry name" value="dCTP_deaminase"/>
    <property type="match status" value="1"/>
</dbReference>
<dbReference type="InterPro" id="IPR011962">
    <property type="entry name" value="dCTP_deaminase"/>
</dbReference>
<dbReference type="InterPro" id="IPR036157">
    <property type="entry name" value="dUTPase-like_sf"/>
</dbReference>
<dbReference type="InterPro" id="IPR033704">
    <property type="entry name" value="dUTPase_trimeric"/>
</dbReference>
<dbReference type="NCBIfam" id="TIGR02274">
    <property type="entry name" value="dCTP_deam"/>
    <property type="match status" value="1"/>
</dbReference>
<dbReference type="PANTHER" id="PTHR42680">
    <property type="entry name" value="DCTP DEAMINASE"/>
    <property type="match status" value="1"/>
</dbReference>
<dbReference type="PANTHER" id="PTHR42680:SF3">
    <property type="entry name" value="DCTP DEAMINASE"/>
    <property type="match status" value="1"/>
</dbReference>
<dbReference type="Pfam" id="PF22769">
    <property type="entry name" value="DCD"/>
    <property type="match status" value="1"/>
</dbReference>
<dbReference type="SUPFAM" id="SSF51283">
    <property type="entry name" value="dUTPase-like"/>
    <property type="match status" value="1"/>
</dbReference>
<gene>
    <name evidence="1" type="primary">dcd</name>
    <name type="ordered locus">ECH74115_3002</name>
</gene>
<reference key="1">
    <citation type="journal article" date="2011" name="Proc. Natl. Acad. Sci. U.S.A.">
        <title>Genomic anatomy of Escherichia coli O157:H7 outbreaks.</title>
        <authorList>
            <person name="Eppinger M."/>
            <person name="Mammel M.K."/>
            <person name="Leclerc J.E."/>
            <person name="Ravel J."/>
            <person name="Cebula T.A."/>
        </authorList>
    </citation>
    <scope>NUCLEOTIDE SEQUENCE [LARGE SCALE GENOMIC DNA]</scope>
    <source>
        <strain>EC4115 / EHEC</strain>
    </source>
</reference>
<accession>B5YUC5</accession>